<dbReference type="EC" id="3.2.2.-" evidence="1"/>
<dbReference type="EMBL" id="BX572601">
    <property type="protein sequence ID" value="CAE28027.1"/>
    <property type="status" value="ALT_INIT"/>
    <property type="molecule type" value="Genomic_DNA"/>
</dbReference>
<dbReference type="RefSeq" id="WP_042441575.1">
    <property type="nucleotide sequence ID" value="NZ_CP116810.1"/>
</dbReference>
<dbReference type="SMR" id="Q6N6M8"/>
<dbReference type="STRING" id="258594.RPA2586"/>
<dbReference type="GeneID" id="66893655"/>
<dbReference type="eggNOG" id="COG2094">
    <property type="taxonomic scope" value="Bacteria"/>
</dbReference>
<dbReference type="HOGENOM" id="CLU_060471_2_0_5"/>
<dbReference type="PhylomeDB" id="Q6N6M8"/>
<dbReference type="GO" id="GO:0003905">
    <property type="term" value="F:alkylbase DNA N-glycosylase activity"/>
    <property type="evidence" value="ECO:0007669"/>
    <property type="project" value="InterPro"/>
</dbReference>
<dbReference type="GO" id="GO:0003677">
    <property type="term" value="F:DNA binding"/>
    <property type="evidence" value="ECO:0007669"/>
    <property type="project" value="InterPro"/>
</dbReference>
<dbReference type="GO" id="GO:0006284">
    <property type="term" value="P:base-excision repair"/>
    <property type="evidence" value="ECO:0007669"/>
    <property type="project" value="InterPro"/>
</dbReference>
<dbReference type="CDD" id="cd00540">
    <property type="entry name" value="AAG"/>
    <property type="match status" value="1"/>
</dbReference>
<dbReference type="FunFam" id="3.10.300.10:FF:000001">
    <property type="entry name" value="Putative 3-methyladenine DNA glycosylase"/>
    <property type="match status" value="1"/>
</dbReference>
<dbReference type="Gene3D" id="3.10.300.10">
    <property type="entry name" value="Methylpurine-DNA glycosylase (MPG)"/>
    <property type="match status" value="1"/>
</dbReference>
<dbReference type="HAMAP" id="MF_00527">
    <property type="entry name" value="3MGH"/>
    <property type="match status" value="1"/>
</dbReference>
<dbReference type="InterPro" id="IPR011034">
    <property type="entry name" value="Formyl_transferase-like_C_sf"/>
</dbReference>
<dbReference type="InterPro" id="IPR003180">
    <property type="entry name" value="MPG"/>
</dbReference>
<dbReference type="InterPro" id="IPR036995">
    <property type="entry name" value="MPG_sf"/>
</dbReference>
<dbReference type="NCBIfam" id="TIGR00567">
    <property type="entry name" value="3mg"/>
    <property type="match status" value="1"/>
</dbReference>
<dbReference type="NCBIfam" id="NF002003">
    <property type="entry name" value="PRK00802.1-3"/>
    <property type="match status" value="1"/>
</dbReference>
<dbReference type="PANTHER" id="PTHR10429">
    <property type="entry name" value="DNA-3-METHYLADENINE GLYCOSYLASE"/>
    <property type="match status" value="1"/>
</dbReference>
<dbReference type="PANTHER" id="PTHR10429:SF0">
    <property type="entry name" value="DNA-3-METHYLADENINE GLYCOSYLASE"/>
    <property type="match status" value="1"/>
</dbReference>
<dbReference type="Pfam" id="PF02245">
    <property type="entry name" value="Pur_DNA_glyco"/>
    <property type="match status" value="1"/>
</dbReference>
<dbReference type="SUPFAM" id="SSF50486">
    <property type="entry name" value="FMT C-terminal domain-like"/>
    <property type="match status" value="1"/>
</dbReference>
<reference key="1">
    <citation type="journal article" date="2004" name="Nat. Biotechnol.">
        <title>Complete genome sequence of the metabolically versatile photosynthetic bacterium Rhodopseudomonas palustris.</title>
        <authorList>
            <person name="Larimer F.W."/>
            <person name="Chain P."/>
            <person name="Hauser L."/>
            <person name="Lamerdin J.E."/>
            <person name="Malfatti S."/>
            <person name="Do L."/>
            <person name="Land M.L."/>
            <person name="Pelletier D.A."/>
            <person name="Beatty J.T."/>
            <person name="Lang A.S."/>
            <person name="Tabita F.R."/>
            <person name="Gibson J.L."/>
            <person name="Hanson T.E."/>
            <person name="Bobst C."/>
            <person name="Torres y Torres J.L."/>
            <person name="Peres C."/>
            <person name="Harrison F.H."/>
            <person name="Gibson J."/>
            <person name="Harwood C.S."/>
        </authorList>
    </citation>
    <scope>NUCLEOTIDE SEQUENCE [LARGE SCALE GENOMIC DNA]</scope>
    <source>
        <strain>ATCC BAA-98 / CGA009</strain>
    </source>
</reference>
<organism>
    <name type="scientific">Rhodopseudomonas palustris (strain ATCC BAA-98 / CGA009)</name>
    <dbReference type="NCBI Taxonomy" id="258594"/>
    <lineage>
        <taxon>Bacteria</taxon>
        <taxon>Pseudomonadati</taxon>
        <taxon>Pseudomonadota</taxon>
        <taxon>Alphaproteobacteria</taxon>
        <taxon>Hyphomicrobiales</taxon>
        <taxon>Nitrobacteraceae</taxon>
        <taxon>Rhodopseudomonas</taxon>
    </lineage>
</organism>
<protein>
    <recommendedName>
        <fullName evidence="1">Putative 3-methyladenine DNA glycosylase</fullName>
        <ecNumber evidence="1">3.2.2.-</ecNumber>
    </recommendedName>
</protein>
<proteinExistence type="inferred from homology"/>
<name>3MGH_RHOPA</name>
<keyword id="KW-0227">DNA damage</keyword>
<keyword id="KW-0234">DNA repair</keyword>
<keyword id="KW-0378">Hydrolase</keyword>
<evidence type="ECO:0000255" key="1">
    <source>
        <dbReference type="HAMAP-Rule" id="MF_00527"/>
    </source>
</evidence>
<evidence type="ECO:0000305" key="2"/>
<accession>Q6N6M8</accession>
<comment type="similarity">
    <text evidence="1">Belongs to the DNA glycosylase MPG family.</text>
</comment>
<comment type="sequence caution" evidence="2">
    <conflict type="erroneous initiation">
        <sequence resource="EMBL-CDS" id="CAE28027"/>
    </conflict>
</comment>
<feature type="chain" id="PRO_0000265050" description="Putative 3-methyladenine DNA glycosylase">
    <location>
        <begin position="1"/>
        <end position="206"/>
    </location>
</feature>
<gene>
    <name type="ordered locus">RPA2586</name>
</gene>
<sequence>MTKSRAPKPPSDGTHPALGPLLTRWFFARSVHEVAPELIGATLLFGGAGGIIVEVEAYHHTDPAAHSYGGPTPRNQVMFGPPGFAYVYRSYGIHWCVNVVCEPEGSASAVLIRALEPTHGLAAMRKRRGLDEPRSLCSGPGKLAQALGITIADNGLPLDAAPFAIHRRTTTPEIVAGPRIGITKAADYPWRFGLKDSRFLSKPFPR</sequence>